<accession>F9WZD2</accession>
<sequence>MDKFSQSPPLRDDLVRGSSLNWTKEKENILKGPFNYLESHPGKDIRSQLIAAFNAWLDVPEESLNVIRRVVAMLHTASLLIDDVEDNSQLRRGIPVAHNVFGTAQTINSANYVYFCALKELAILNNPAVIQIYTEELVNLHRGQGMDLFWRDTLTCPSEDDYLEMVGNKTGGLFRLAIKLMCAESPSHNAHPDPFQRNDYVPLVNTIGLLFQILDDYKNLSDTIYTQNKGLCEDLTEGKFSFPIIHAIRADPGNLVLINILKQKTTDDEVKKYAVAYMDRAGSFSYTRKVLRGLTKKALTQVDEVDAGRGRGEQMKTILEKLRVDRNHQRGVLTPAAGGASIA</sequence>
<evidence type="ECO:0000250" key="1">
    <source>
        <dbReference type="UniProtKB" id="Q12051"/>
    </source>
</evidence>
<evidence type="ECO:0000269" key="2">
    <source>
    </source>
</evidence>
<evidence type="ECO:0000303" key="3">
    <source>
    </source>
</evidence>
<evidence type="ECO:0000305" key="4"/>
<evidence type="ECO:0000305" key="5">
    <source>
    </source>
</evidence>
<dbReference type="EC" id="2.5.1.-" evidence="5"/>
<dbReference type="EC" id="2.5.1.1" evidence="1"/>
<dbReference type="EC" id="2.5.1.29" evidence="1"/>
<dbReference type="EC" id="2.5.1.10" evidence="1"/>
<dbReference type="EMBL" id="CM001196">
    <property type="protein sequence ID" value="EGP92222.1"/>
    <property type="molecule type" value="Genomic_DNA"/>
</dbReference>
<dbReference type="RefSeq" id="XP_003857246.1">
    <property type="nucleotide sequence ID" value="XM_003857198.1"/>
</dbReference>
<dbReference type="SMR" id="F9WZD2"/>
<dbReference type="FunCoup" id="F9WZD2">
    <property type="interactions" value="439"/>
</dbReference>
<dbReference type="STRING" id="336722.F9WZD2"/>
<dbReference type="EnsemblFungi" id="Mycgr3T33174">
    <property type="protein sequence ID" value="Mycgr3P33174"/>
    <property type="gene ID" value="Mycgr3G33174"/>
</dbReference>
<dbReference type="GeneID" id="13394973"/>
<dbReference type="KEGG" id="ztr:MYCGRDRAFT_33174"/>
<dbReference type="eggNOG" id="KOG0777">
    <property type="taxonomic scope" value="Eukaryota"/>
</dbReference>
<dbReference type="HOGENOM" id="CLU_014015_6_0_1"/>
<dbReference type="InParanoid" id="F9WZD2"/>
<dbReference type="OMA" id="FYSKAFF"/>
<dbReference type="OrthoDB" id="6921389at2759"/>
<dbReference type="Proteomes" id="UP000008062">
    <property type="component" value="Chromosome 1"/>
</dbReference>
<dbReference type="GO" id="GO:0004337">
    <property type="term" value="F:(2E,6E)-farnesyl diphosphate synthase activity"/>
    <property type="evidence" value="ECO:0007669"/>
    <property type="project" value="UniProtKB-EC"/>
</dbReference>
<dbReference type="GO" id="GO:0004161">
    <property type="term" value="F:dimethylallyltranstransferase activity"/>
    <property type="evidence" value="ECO:0007669"/>
    <property type="project" value="UniProtKB-EC"/>
</dbReference>
<dbReference type="GO" id="GO:0004311">
    <property type="term" value="F:geranylgeranyl diphosphate synthase activity"/>
    <property type="evidence" value="ECO:0007669"/>
    <property type="project" value="UniProtKB-EC"/>
</dbReference>
<dbReference type="GO" id="GO:0046872">
    <property type="term" value="F:metal ion binding"/>
    <property type="evidence" value="ECO:0007669"/>
    <property type="project" value="UniProtKB-KW"/>
</dbReference>
<dbReference type="GO" id="GO:0046165">
    <property type="term" value="P:alcohol biosynthetic process"/>
    <property type="evidence" value="ECO:0007669"/>
    <property type="project" value="UniProtKB-ARBA"/>
</dbReference>
<dbReference type="GO" id="GO:0008299">
    <property type="term" value="P:isoprenoid biosynthetic process"/>
    <property type="evidence" value="ECO:0007669"/>
    <property type="project" value="InterPro"/>
</dbReference>
<dbReference type="GO" id="GO:0043386">
    <property type="term" value="P:mycotoxin biosynthetic process"/>
    <property type="evidence" value="ECO:0007669"/>
    <property type="project" value="UniProtKB-ARBA"/>
</dbReference>
<dbReference type="CDD" id="cd00685">
    <property type="entry name" value="Trans_IPPS_HT"/>
    <property type="match status" value="1"/>
</dbReference>
<dbReference type="Gene3D" id="1.10.600.10">
    <property type="entry name" value="Farnesyl Diphosphate Synthase"/>
    <property type="match status" value="1"/>
</dbReference>
<dbReference type="InterPro" id="IPR008949">
    <property type="entry name" value="Isoprenoid_synthase_dom_sf"/>
</dbReference>
<dbReference type="InterPro" id="IPR000092">
    <property type="entry name" value="Polyprenyl_synt"/>
</dbReference>
<dbReference type="InterPro" id="IPR033749">
    <property type="entry name" value="Polyprenyl_synt_CS"/>
</dbReference>
<dbReference type="PANTHER" id="PTHR12001">
    <property type="entry name" value="GERANYLGERANYL PYROPHOSPHATE SYNTHASE"/>
    <property type="match status" value="1"/>
</dbReference>
<dbReference type="PANTHER" id="PTHR12001:SF44">
    <property type="entry name" value="GERANYLGERANYL PYROPHOSPHATE SYNTHASE"/>
    <property type="match status" value="1"/>
</dbReference>
<dbReference type="Pfam" id="PF00348">
    <property type="entry name" value="polyprenyl_synt"/>
    <property type="match status" value="1"/>
</dbReference>
<dbReference type="SFLD" id="SFLDS00005">
    <property type="entry name" value="Isoprenoid_Synthase_Type_I"/>
    <property type="match status" value="1"/>
</dbReference>
<dbReference type="SUPFAM" id="SSF48576">
    <property type="entry name" value="Terpenoid synthases"/>
    <property type="match status" value="1"/>
</dbReference>
<dbReference type="PROSITE" id="PS00723">
    <property type="entry name" value="POLYPRENYL_SYNTHASE_1"/>
    <property type="match status" value="1"/>
</dbReference>
<dbReference type="PROSITE" id="PS00444">
    <property type="entry name" value="POLYPRENYL_SYNTHASE_2"/>
    <property type="match status" value="1"/>
</dbReference>
<name>GSS1_ZYMTI</name>
<organism>
    <name type="scientific">Zymoseptoria tritici (strain CBS 115943 / IPO323)</name>
    <name type="common">Speckled leaf blotch fungus</name>
    <name type="synonym">Septoria tritici</name>
    <dbReference type="NCBI Taxonomy" id="336722"/>
    <lineage>
        <taxon>Eukaryota</taxon>
        <taxon>Fungi</taxon>
        <taxon>Dikarya</taxon>
        <taxon>Ascomycota</taxon>
        <taxon>Pezizomycotina</taxon>
        <taxon>Dothideomycetes</taxon>
        <taxon>Dothideomycetidae</taxon>
        <taxon>Mycosphaerellales</taxon>
        <taxon>Mycosphaerellaceae</taxon>
        <taxon>Zymoseptoria</taxon>
    </lineage>
</organism>
<protein>
    <recommendedName>
        <fullName evidence="3">Geranylgeranyl pyrophosphate synthase 1</fullName>
        <shortName evidence="3">GGPP synthase 1</shortName>
        <shortName evidence="3">GGPPSase 1</shortName>
        <ecNumber evidence="5">2.5.1.-</ecNumber>
    </recommendedName>
    <alternativeName>
        <fullName evidence="1">(2E,6E)-farnesyl diphosphate synthase</fullName>
    </alternativeName>
    <alternativeName>
        <fullName evidence="1">Dimethylallyltranstransferase</fullName>
        <ecNumber evidence="1">2.5.1.1</ecNumber>
    </alternativeName>
    <alternativeName>
        <fullName evidence="1">Farnesyl diphosphate synthase</fullName>
    </alternativeName>
    <alternativeName>
        <fullName evidence="1">Farnesyltranstransferase</fullName>
        <ecNumber evidence="1">2.5.1.29</ecNumber>
    </alternativeName>
    <alternativeName>
        <fullName evidence="1">Geranylgeranyl diphosphate synthase</fullName>
    </alternativeName>
    <alternativeName>
        <fullName evidence="1">Geranyltranstransferase</fullName>
        <ecNumber evidence="1">2.5.1.10</ecNumber>
    </alternativeName>
</protein>
<keyword id="KW-0460">Magnesium</keyword>
<keyword id="KW-0479">Metal-binding</keyword>
<keyword id="KW-1185">Reference proteome</keyword>
<keyword id="KW-0808">Transferase</keyword>
<feature type="chain" id="PRO_0000451066" description="Geranylgeranyl pyrophosphate synthase 1">
    <location>
        <begin position="1"/>
        <end position="343"/>
    </location>
</feature>
<feature type="binding site" evidence="1">
    <location>
        <position position="43"/>
    </location>
    <ligand>
        <name>isopentenyl diphosphate</name>
        <dbReference type="ChEBI" id="CHEBI:128769"/>
    </ligand>
</feature>
<feature type="binding site" evidence="1">
    <location>
        <position position="46"/>
    </location>
    <ligand>
        <name>isopentenyl diphosphate</name>
        <dbReference type="ChEBI" id="CHEBI:128769"/>
    </ligand>
</feature>
<feature type="binding site" evidence="1">
    <location>
        <position position="75"/>
    </location>
    <ligand>
        <name>isopentenyl diphosphate</name>
        <dbReference type="ChEBI" id="CHEBI:128769"/>
    </ligand>
</feature>
<feature type="binding site" evidence="1">
    <location>
        <position position="82"/>
    </location>
    <ligand>
        <name>Mg(2+)</name>
        <dbReference type="ChEBI" id="CHEBI:18420"/>
        <label>1</label>
    </ligand>
</feature>
<feature type="binding site" evidence="1">
    <location>
        <position position="82"/>
    </location>
    <ligand>
        <name>Mg(2+)</name>
        <dbReference type="ChEBI" id="CHEBI:18420"/>
        <label>2</label>
    </ligand>
</feature>
<feature type="binding site" evidence="1">
    <location>
        <position position="86"/>
    </location>
    <ligand>
        <name>Mg(2+)</name>
        <dbReference type="ChEBI" id="CHEBI:18420"/>
        <label>1</label>
    </ligand>
</feature>
<feature type="binding site" evidence="1">
    <location>
        <position position="86"/>
    </location>
    <ligand>
        <name>Mg(2+)</name>
        <dbReference type="ChEBI" id="CHEBI:18420"/>
        <label>2</label>
    </ligand>
</feature>
<feature type="binding site" evidence="1">
    <location>
        <position position="91"/>
    </location>
    <ligand>
        <name>dimethylallyl diphosphate</name>
        <dbReference type="ChEBI" id="CHEBI:57623"/>
    </ligand>
</feature>
<feature type="binding site" evidence="1">
    <location>
        <position position="92"/>
    </location>
    <ligand>
        <name>isopentenyl diphosphate</name>
        <dbReference type="ChEBI" id="CHEBI:128769"/>
    </ligand>
</feature>
<feature type="binding site" evidence="1">
    <location>
        <position position="169"/>
    </location>
    <ligand>
        <name>dimethylallyl diphosphate</name>
        <dbReference type="ChEBI" id="CHEBI:57623"/>
    </ligand>
</feature>
<feature type="binding site" evidence="1">
    <location>
        <position position="170"/>
    </location>
    <ligand>
        <name>dimethylallyl diphosphate</name>
        <dbReference type="ChEBI" id="CHEBI:57623"/>
    </ligand>
</feature>
<feature type="binding site" evidence="1">
    <location>
        <position position="212"/>
    </location>
    <ligand>
        <name>dimethylallyl diphosphate</name>
        <dbReference type="ChEBI" id="CHEBI:57623"/>
    </ligand>
</feature>
<feature type="binding site" evidence="1">
    <location>
        <position position="215"/>
    </location>
    <ligand>
        <name>Mg(2+)</name>
        <dbReference type="ChEBI" id="CHEBI:18420"/>
        <label>3</label>
    </ligand>
</feature>
<feature type="binding site" evidence="1">
    <location>
        <position position="219"/>
    </location>
    <ligand>
        <name>dimethylallyl diphosphate</name>
        <dbReference type="ChEBI" id="CHEBI:57623"/>
    </ligand>
</feature>
<feature type="binding site" evidence="1">
    <location>
        <position position="229"/>
    </location>
    <ligand>
        <name>dimethylallyl diphosphate</name>
        <dbReference type="ChEBI" id="CHEBI:57623"/>
    </ligand>
</feature>
<feature type="binding site" evidence="1">
    <location>
        <position position="239"/>
    </location>
    <ligand>
        <name>dimethylallyl diphosphate</name>
        <dbReference type="ChEBI" id="CHEBI:57623"/>
    </ligand>
</feature>
<feature type="site" description="Important for determining product chain length" evidence="1">
    <location>
        <position position="114"/>
    </location>
</feature>
<proteinExistence type="inferred from homology"/>
<comment type="function">
    <text evidence="2">Geranylgeranyl pyrophosphate synthase; part of the gene cluster 4 that mediates the biosynthesis of an isoprenoid secondary metabolite.</text>
</comment>
<comment type="catalytic activity">
    <reaction evidence="1">
        <text>isopentenyl diphosphate + dimethylallyl diphosphate = (2E)-geranyl diphosphate + diphosphate</text>
        <dbReference type="Rhea" id="RHEA:22408"/>
        <dbReference type="ChEBI" id="CHEBI:33019"/>
        <dbReference type="ChEBI" id="CHEBI:57623"/>
        <dbReference type="ChEBI" id="CHEBI:58057"/>
        <dbReference type="ChEBI" id="CHEBI:128769"/>
        <dbReference type="EC" id="2.5.1.1"/>
    </reaction>
</comment>
<comment type="catalytic activity">
    <reaction evidence="1">
        <text>isopentenyl diphosphate + (2E)-geranyl diphosphate = (2E,6E)-farnesyl diphosphate + diphosphate</text>
        <dbReference type="Rhea" id="RHEA:19361"/>
        <dbReference type="ChEBI" id="CHEBI:33019"/>
        <dbReference type="ChEBI" id="CHEBI:58057"/>
        <dbReference type="ChEBI" id="CHEBI:128769"/>
        <dbReference type="ChEBI" id="CHEBI:175763"/>
        <dbReference type="EC" id="2.5.1.10"/>
    </reaction>
</comment>
<comment type="catalytic activity">
    <reaction evidence="1">
        <text>isopentenyl diphosphate + (2E,6E)-farnesyl diphosphate = (2E,6E,10E)-geranylgeranyl diphosphate + diphosphate</text>
        <dbReference type="Rhea" id="RHEA:17653"/>
        <dbReference type="ChEBI" id="CHEBI:33019"/>
        <dbReference type="ChEBI" id="CHEBI:58756"/>
        <dbReference type="ChEBI" id="CHEBI:128769"/>
        <dbReference type="ChEBI" id="CHEBI:175763"/>
        <dbReference type="EC" id="2.5.1.29"/>
    </reaction>
</comment>
<comment type="cofactor">
    <cofactor evidence="1">
        <name>Mg(2+)</name>
        <dbReference type="ChEBI" id="CHEBI:18420"/>
    </cofactor>
    <text evidence="1">Binds 3 Mg(2+) ions per subunit.</text>
</comment>
<comment type="similarity">
    <text evidence="4">Belongs to the FPP/GGPP synthase family.</text>
</comment>
<reference key="1">
    <citation type="journal article" date="2011" name="PLoS Genet.">
        <title>Finished genome of the fungal wheat pathogen Mycosphaerella graminicola reveals dispensome structure, chromosome plasticity, and stealth pathogenesis.</title>
        <authorList>
            <person name="Goodwin S.B."/>
            <person name="Ben M'barek S."/>
            <person name="Dhillon B."/>
            <person name="Wittenberg A.H.J."/>
            <person name="Crane C.F."/>
            <person name="Hane J.K."/>
            <person name="Foster A.J."/>
            <person name="Van der Lee T.A.J."/>
            <person name="Grimwood J."/>
            <person name="Aerts A."/>
            <person name="Antoniw J."/>
            <person name="Bailey A."/>
            <person name="Bluhm B."/>
            <person name="Bowler J."/>
            <person name="Bristow J."/>
            <person name="van der Burgt A."/>
            <person name="Canto-Canche B."/>
            <person name="Churchill A.C.L."/>
            <person name="Conde-Ferraez L."/>
            <person name="Cools H.J."/>
            <person name="Coutinho P.M."/>
            <person name="Csukai M."/>
            <person name="Dehal P."/>
            <person name="De Wit P."/>
            <person name="Donzelli B."/>
            <person name="van de Geest H.C."/>
            <person name="van Ham R.C.H.J."/>
            <person name="Hammond-Kosack K.E."/>
            <person name="Henrissat B."/>
            <person name="Kilian A."/>
            <person name="Kobayashi A.K."/>
            <person name="Koopmann E."/>
            <person name="Kourmpetis Y."/>
            <person name="Kuzniar A."/>
            <person name="Lindquist E."/>
            <person name="Lombard V."/>
            <person name="Maliepaard C."/>
            <person name="Martins N."/>
            <person name="Mehrabi R."/>
            <person name="Nap J.P.H."/>
            <person name="Ponomarenko A."/>
            <person name="Rudd J.J."/>
            <person name="Salamov A."/>
            <person name="Schmutz J."/>
            <person name="Schouten H.J."/>
            <person name="Shapiro H."/>
            <person name="Stergiopoulos I."/>
            <person name="Torriani S.F.F."/>
            <person name="Tu H."/>
            <person name="de Vries R.P."/>
            <person name="Waalwijk C."/>
            <person name="Ware S.B."/>
            <person name="Wiebenga A."/>
            <person name="Zwiers L.-H."/>
            <person name="Oliver R.P."/>
            <person name="Grigoriev I.V."/>
            <person name="Kema G.H.J."/>
        </authorList>
    </citation>
    <scope>NUCLEOTIDE SEQUENCE [LARGE SCALE GENOMIC DNA]</scope>
    <source>
        <strain>CBS 115943 / IPO323</strain>
    </source>
</reference>
<reference key="2">
    <citation type="journal article" date="2017" name="BMC Genomics">
        <title>In silico prediction and characterization of secondary metabolite biosynthetic gene clusters in the wheat pathogen Zymoseptoria tritici.</title>
        <authorList>
            <person name="Cairns T."/>
            <person name="Meyer V."/>
        </authorList>
    </citation>
    <scope>IDENTIFICATION</scope>
    <scope>FUNCTION</scope>
</reference>
<gene>
    <name type="primary">GGS1</name>
    <name type="ORF">MYCGRDRAFT_33174</name>
</gene>